<organism>
    <name type="scientific">Actinobacillus pleuropneumoniae serotype 5b (strain L20)</name>
    <dbReference type="NCBI Taxonomy" id="416269"/>
    <lineage>
        <taxon>Bacteria</taxon>
        <taxon>Pseudomonadati</taxon>
        <taxon>Pseudomonadota</taxon>
        <taxon>Gammaproteobacteria</taxon>
        <taxon>Pasteurellales</taxon>
        <taxon>Pasteurellaceae</taxon>
        <taxon>Actinobacillus</taxon>
    </lineage>
</organism>
<name>RL20_ACTP2</name>
<comment type="function">
    <text evidence="1">Binds directly to 23S ribosomal RNA and is necessary for the in vitro assembly process of the 50S ribosomal subunit. It is not involved in the protein synthesizing functions of that subunit.</text>
</comment>
<comment type="similarity">
    <text evidence="1">Belongs to the bacterial ribosomal protein bL20 family.</text>
</comment>
<evidence type="ECO:0000255" key="1">
    <source>
        <dbReference type="HAMAP-Rule" id="MF_00382"/>
    </source>
</evidence>
<evidence type="ECO:0000305" key="2"/>
<feature type="chain" id="PRO_1000048919" description="Large ribosomal subunit protein bL20">
    <location>
        <begin position="1"/>
        <end position="117"/>
    </location>
</feature>
<reference key="1">
    <citation type="journal article" date="2008" name="J. Bacteriol.">
        <title>The complete genome sequence of Actinobacillus pleuropneumoniae L20 (serotype 5b).</title>
        <authorList>
            <person name="Foote S.J."/>
            <person name="Bosse J.T."/>
            <person name="Bouevitch A.B."/>
            <person name="Langford P.R."/>
            <person name="Young N.M."/>
            <person name="Nash J.H.E."/>
        </authorList>
    </citation>
    <scope>NUCLEOTIDE SEQUENCE [LARGE SCALE GENOMIC DNA]</scope>
    <source>
        <strain>L20</strain>
    </source>
</reference>
<accession>A3MYU7</accession>
<protein>
    <recommendedName>
        <fullName evidence="1">Large ribosomal subunit protein bL20</fullName>
    </recommendedName>
    <alternativeName>
        <fullName evidence="2">50S ribosomal protein L20</fullName>
    </alternativeName>
</protein>
<proteinExistence type="inferred from homology"/>
<gene>
    <name evidence="1" type="primary">rplT</name>
    <name type="ordered locus">APL_0225</name>
</gene>
<keyword id="KW-1185">Reference proteome</keyword>
<keyword id="KW-0687">Ribonucleoprotein</keyword>
<keyword id="KW-0689">Ribosomal protein</keyword>
<keyword id="KW-0694">RNA-binding</keyword>
<keyword id="KW-0699">rRNA-binding</keyword>
<dbReference type="EMBL" id="CP000569">
    <property type="protein sequence ID" value="ABN73333.1"/>
    <property type="molecule type" value="Genomic_DNA"/>
</dbReference>
<dbReference type="RefSeq" id="WP_005596075.1">
    <property type="nucleotide sequence ID" value="NC_009053.1"/>
</dbReference>
<dbReference type="SMR" id="A3MYU7"/>
<dbReference type="STRING" id="416269.APL_0225"/>
<dbReference type="EnsemblBacteria" id="ABN73333">
    <property type="protein sequence ID" value="ABN73333"/>
    <property type="gene ID" value="APL_0225"/>
</dbReference>
<dbReference type="GeneID" id="93297698"/>
<dbReference type="KEGG" id="apl:APL_0225"/>
<dbReference type="eggNOG" id="COG0292">
    <property type="taxonomic scope" value="Bacteria"/>
</dbReference>
<dbReference type="HOGENOM" id="CLU_123265_0_1_6"/>
<dbReference type="Proteomes" id="UP000001432">
    <property type="component" value="Chromosome"/>
</dbReference>
<dbReference type="GO" id="GO:1990904">
    <property type="term" value="C:ribonucleoprotein complex"/>
    <property type="evidence" value="ECO:0007669"/>
    <property type="project" value="UniProtKB-KW"/>
</dbReference>
<dbReference type="GO" id="GO:0005840">
    <property type="term" value="C:ribosome"/>
    <property type="evidence" value="ECO:0007669"/>
    <property type="project" value="UniProtKB-KW"/>
</dbReference>
<dbReference type="GO" id="GO:0019843">
    <property type="term" value="F:rRNA binding"/>
    <property type="evidence" value="ECO:0007669"/>
    <property type="project" value="UniProtKB-UniRule"/>
</dbReference>
<dbReference type="GO" id="GO:0003735">
    <property type="term" value="F:structural constituent of ribosome"/>
    <property type="evidence" value="ECO:0007669"/>
    <property type="project" value="InterPro"/>
</dbReference>
<dbReference type="GO" id="GO:0000027">
    <property type="term" value="P:ribosomal large subunit assembly"/>
    <property type="evidence" value="ECO:0007669"/>
    <property type="project" value="UniProtKB-UniRule"/>
</dbReference>
<dbReference type="GO" id="GO:0006412">
    <property type="term" value="P:translation"/>
    <property type="evidence" value="ECO:0007669"/>
    <property type="project" value="InterPro"/>
</dbReference>
<dbReference type="CDD" id="cd07026">
    <property type="entry name" value="Ribosomal_L20"/>
    <property type="match status" value="1"/>
</dbReference>
<dbReference type="FunFam" id="1.10.1900.20:FF:000001">
    <property type="entry name" value="50S ribosomal protein L20"/>
    <property type="match status" value="1"/>
</dbReference>
<dbReference type="Gene3D" id="6.10.160.10">
    <property type="match status" value="1"/>
</dbReference>
<dbReference type="Gene3D" id="1.10.1900.20">
    <property type="entry name" value="Ribosomal protein L20"/>
    <property type="match status" value="1"/>
</dbReference>
<dbReference type="HAMAP" id="MF_00382">
    <property type="entry name" value="Ribosomal_bL20"/>
    <property type="match status" value="1"/>
</dbReference>
<dbReference type="InterPro" id="IPR005813">
    <property type="entry name" value="Ribosomal_bL20"/>
</dbReference>
<dbReference type="InterPro" id="IPR049946">
    <property type="entry name" value="RIBOSOMAL_L20_CS"/>
</dbReference>
<dbReference type="InterPro" id="IPR035566">
    <property type="entry name" value="Ribosomal_protein_bL20_C"/>
</dbReference>
<dbReference type="NCBIfam" id="TIGR01032">
    <property type="entry name" value="rplT_bact"/>
    <property type="match status" value="1"/>
</dbReference>
<dbReference type="PANTHER" id="PTHR10986">
    <property type="entry name" value="39S RIBOSOMAL PROTEIN L20"/>
    <property type="match status" value="1"/>
</dbReference>
<dbReference type="Pfam" id="PF00453">
    <property type="entry name" value="Ribosomal_L20"/>
    <property type="match status" value="1"/>
</dbReference>
<dbReference type="PRINTS" id="PR00062">
    <property type="entry name" value="RIBOSOMALL20"/>
</dbReference>
<dbReference type="SUPFAM" id="SSF74731">
    <property type="entry name" value="Ribosomal protein L20"/>
    <property type="match status" value="1"/>
</dbReference>
<dbReference type="PROSITE" id="PS00937">
    <property type="entry name" value="RIBOSOMAL_L20"/>
    <property type="match status" value="1"/>
</dbReference>
<sequence>MARVKRGVIARARHKKVLKAAKGYYGARSRVYRVAFQAVIKAGQYAYRDRRQRKRQFRQLWIARINAAARQNGLSYSKFINGLKKASVEIDRKILADIAVFDKVAFAALVEKAKSAL</sequence>